<dbReference type="EMBL" id="AM286415">
    <property type="protein sequence ID" value="CAL10520.1"/>
    <property type="molecule type" value="Genomic_DNA"/>
</dbReference>
<dbReference type="RefSeq" id="YP_001004766.1">
    <property type="nucleotide sequence ID" value="NC_008800.1"/>
</dbReference>
<dbReference type="SMR" id="A1JIS9"/>
<dbReference type="KEGG" id="yen:YE0393"/>
<dbReference type="PATRIC" id="fig|393305.7.peg.487"/>
<dbReference type="eggNOG" id="COG2965">
    <property type="taxonomic scope" value="Bacteria"/>
</dbReference>
<dbReference type="HOGENOM" id="CLU_166075_0_0_6"/>
<dbReference type="OrthoDB" id="9180733at2"/>
<dbReference type="Proteomes" id="UP000000642">
    <property type="component" value="Chromosome"/>
</dbReference>
<dbReference type="GO" id="GO:1990077">
    <property type="term" value="C:primosome complex"/>
    <property type="evidence" value="ECO:0007669"/>
    <property type="project" value="UniProtKB-KW"/>
</dbReference>
<dbReference type="GO" id="GO:0003697">
    <property type="term" value="F:single-stranded DNA binding"/>
    <property type="evidence" value="ECO:0007669"/>
    <property type="project" value="UniProtKB-UniRule"/>
</dbReference>
<dbReference type="GO" id="GO:0006269">
    <property type="term" value="P:DNA replication, synthesis of primer"/>
    <property type="evidence" value="ECO:0007669"/>
    <property type="project" value="UniProtKB-KW"/>
</dbReference>
<dbReference type="Gene3D" id="2.40.50.140">
    <property type="entry name" value="Nucleic acid-binding proteins"/>
    <property type="match status" value="1"/>
</dbReference>
<dbReference type="HAMAP" id="MF_00720">
    <property type="entry name" value="PriB"/>
    <property type="match status" value="1"/>
</dbReference>
<dbReference type="InterPro" id="IPR012340">
    <property type="entry name" value="NA-bd_OB-fold"/>
</dbReference>
<dbReference type="InterPro" id="IPR000424">
    <property type="entry name" value="Primosome_PriB/ssb"/>
</dbReference>
<dbReference type="InterPro" id="IPR023646">
    <property type="entry name" value="Prisomal_replication_PriB"/>
</dbReference>
<dbReference type="NCBIfam" id="TIGR04418">
    <property type="entry name" value="PriB_gamma"/>
    <property type="match status" value="1"/>
</dbReference>
<dbReference type="Pfam" id="PF22657">
    <property type="entry name" value="SSB_1"/>
    <property type="match status" value="1"/>
</dbReference>
<dbReference type="PIRSF" id="PIRSF003135">
    <property type="entry name" value="Primosomal_n"/>
    <property type="match status" value="1"/>
</dbReference>
<dbReference type="SUPFAM" id="SSF50249">
    <property type="entry name" value="Nucleic acid-binding proteins"/>
    <property type="match status" value="1"/>
</dbReference>
<dbReference type="PROSITE" id="PS50935">
    <property type="entry name" value="SSB"/>
    <property type="match status" value="1"/>
</dbReference>
<comment type="function">
    <text evidence="1">Involved in the restart of stalled replication forks, which reloads the replicative helicase on sites other than the origin of replication; the PriA-PriB pathway is the major replication restart pathway. During primosome assembly it facilitates complex formation between PriA and DnaT on DNA; stabilizes PriA on DNA. Stimulates the DNA unwinding activity of PriA helicase.</text>
</comment>
<comment type="subunit">
    <text evidence="1">Homodimer. Interacts with PriA and DnaT. Component of the replication restart primosome. Primosome assembly occurs via a 'hand-off' mechanism. PriA binds to replication forks, subsequently PriB then DnaT bind; DnaT then displaces ssDNA to generate the helicase loading substrate.</text>
</comment>
<comment type="similarity">
    <text evidence="1">Belongs to the PriB family.</text>
</comment>
<feature type="chain" id="PRO_1000083302" description="Replication restart protein PriB">
    <location>
        <begin position="1"/>
        <end position="106"/>
    </location>
</feature>
<feature type="domain" description="SSB" evidence="1">
    <location>
        <begin position="4"/>
        <end position="103"/>
    </location>
</feature>
<organism>
    <name type="scientific">Yersinia enterocolitica serotype O:8 / biotype 1B (strain NCTC 13174 / 8081)</name>
    <dbReference type="NCBI Taxonomy" id="393305"/>
    <lineage>
        <taxon>Bacteria</taxon>
        <taxon>Pseudomonadati</taxon>
        <taxon>Pseudomonadota</taxon>
        <taxon>Gammaproteobacteria</taxon>
        <taxon>Enterobacterales</taxon>
        <taxon>Yersiniaceae</taxon>
        <taxon>Yersinia</taxon>
    </lineage>
</organism>
<protein>
    <recommendedName>
        <fullName evidence="1">Replication restart protein PriB</fullName>
    </recommendedName>
</protein>
<reference key="1">
    <citation type="journal article" date="2006" name="PLoS Genet.">
        <title>The complete genome sequence and comparative genome analysis of the high pathogenicity Yersinia enterocolitica strain 8081.</title>
        <authorList>
            <person name="Thomson N.R."/>
            <person name="Howard S."/>
            <person name="Wren B.W."/>
            <person name="Holden M.T.G."/>
            <person name="Crossman L."/>
            <person name="Challis G.L."/>
            <person name="Churcher C."/>
            <person name="Mungall K."/>
            <person name="Brooks K."/>
            <person name="Chillingworth T."/>
            <person name="Feltwell T."/>
            <person name="Abdellah Z."/>
            <person name="Hauser H."/>
            <person name="Jagels K."/>
            <person name="Maddison M."/>
            <person name="Moule S."/>
            <person name="Sanders M."/>
            <person name="Whitehead S."/>
            <person name="Quail M.A."/>
            <person name="Dougan G."/>
            <person name="Parkhill J."/>
            <person name="Prentice M.B."/>
        </authorList>
    </citation>
    <scope>NUCLEOTIDE SEQUENCE [LARGE SCALE GENOMIC DNA]</scope>
    <source>
        <strain>NCTC 13174 / 8081</strain>
    </source>
</reference>
<keyword id="KW-0235">DNA replication</keyword>
<keyword id="KW-0238">DNA-binding</keyword>
<keyword id="KW-0639">Primosome</keyword>
<name>PRIB_YERE8</name>
<evidence type="ECO:0000255" key="1">
    <source>
        <dbReference type="HAMAP-Rule" id="MF_00720"/>
    </source>
</evidence>
<sequence>MVTTNRLVLSGTVCKTPVRKVSPSGIPHCQFVLEHRSTQQEAGFSRQTWCRMPIIVSGQQSQALTHSITVGSQLTVEGFISCHQGRNGLNKLVLHAEQIEFIDSGD</sequence>
<accession>A1JIS9</accession>
<gene>
    <name evidence="1" type="primary">priB</name>
    <name type="ordered locus">YE0393</name>
</gene>
<proteinExistence type="inferred from homology"/>